<proteinExistence type="inferred from homology"/>
<gene>
    <name type="ordered locus">MT2958.2</name>
</gene>
<evidence type="ECO:0000255" key="1"/>
<evidence type="ECO:0000256" key="2">
    <source>
        <dbReference type="SAM" id="MobiDB-lite"/>
    </source>
</evidence>
<organism>
    <name type="scientific">Mycobacterium tuberculosis (strain CDC 1551 / Oshkosh)</name>
    <dbReference type="NCBI Taxonomy" id="83331"/>
    <lineage>
        <taxon>Bacteria</taxon>
        <taxon>Bacillati</taxon>
        <taxon>Actinomycetota</taxon>
        <taxon>Actinomycetes</taxon>
        <taxon>Mycobacteriales</taxon>
        <taxon>Mycobacteriaceae</taxon>
        <taxon>Mycobacterium</taxon>
        <taxon>Mycobacterium tuberculosis complex</taxon>
    </lineage>
</organism>
<dbReference type="EMBL" id="AE000516">
    <property type="status" value="NOT_ANNOTATED_CDS"/>
    <property type="molecule type" value="Genomic_DNA"/>
</dbReference>
<dbReference type="PIR" id="F70925">
    <property type="entry name" value="F70925"/>
</dbReference>
<dbReference type="SMR" id="P9WL32"/>
<dbReference type="Proteomes" id="UP000001020">
    <property type="component" value="Chromosome"/>
</dbReference>
<dbReference type="GO" id="GO:0004222">
    <property type="term" value="F:metalloendopeptidase activity"/>
    <property type="evidence" value="ECO:0007669"/>
    <property type="project" value="TreeGrafter"/>
</dbReference>
<dbReference type="CDD" id="cd12797">
    <property type="entry name" value="M23_peptidase"/>
    <property type="match status" value="1"/>
</dbReference>
<dbReference type="Gene3D" id="2.70.70.10">
    <property type="entry name" value="Glucose Permease (Domain IIA)"/>
    <property type="match status" value="1"/>
</dbReference>
<dbReference type="InterPro" id="IPR050570">
    <property type="entry name" value="Cell_wall_metabolism_enzyme"/>
</dbReference>
<dbReference type="InterPro" id="IPR011055">
    <property type="entry name" value="Dup_hybrid_motif"/>
</dbReference>
<dbReference type="InterPro" id="IPR016047">
    <property type="entry name" value="Peptidase_M23"/>
</dbReference>
<dbReference type="PANTHER" id="PTHR21666:SF289">
    <property type="entry name" value="L-ALA--D-GLU ENDOPEPTIDASE"/>
    <property type="match status" value="1"/>
</dbReference>
<dbReference type="PANTHER" id="PTHR21666">
    <property type="entry name" value="PEPTIDASE-RELATED"/>
    <property type="match status" value="1"/>
</dbReference>
<dbReference type="Pfam" id="PF01551">
    <property type="entry name" value="Peptidase_M23"/>
    <property type="match status" value="1"/>
</dbReference>
<dbReference type="SUPFAM" id="SSF51261">
    <property type="entry name" value="Duplicated hybrid motif"/>
    <property type="match status" value="1"/>
</dbReference>
<reference key="1">
    <citation type="journal article" date="2002" name="J. Bacteriol.">
        <title>Whole-genome comparison of Mycobacterium tuberculosis clinical and laboratory strains.</title>
        <authorList>
            <person name="Fleischmann R.D."/>
            <person name="Alland D."/>
            <person name="Eisen J.A."/>
            <person name="Carpenter L."/>
            <person name="White O."/>
            <person name="Peterson J.D."/>
            <person name="DeBoy R.T."/>
            <person name="Dodson R.J."/>
            <person name="Gwinn M.L."/>
            <person name="Haft D.H."/>
            <person name="Hickey E.K."/>
            <person name="Kolonay J.F."/>
            <person name="Nelson W.C."/>
            <person name="Umayam L.A."/>
            <person name="Ermolaeva M.D."/>
            <person name="Salzberg S.L."/>
            <person name="Delcher A."/>
            <person name="Utterback T.R."/>
            <person name="Weidman J.F."/>
            <person name="Khouri H.M."/>
            <person name="Gill J."/>
            <person name="Mikula A."/>
            <person name="Bishai W."/>
            <person name="Jacobs W.R. Jr."/>
            <person name="Venter J.C."/>
            <person name="Fraser C.M."/>
        </authorList>
    </citation>
    <scope>NUCLEOTIDE SEQUENCE [LARGE SCALE GENOMIC DNA]</scope>
    <source>
        <strain>CDC 1551 / Oshkosh</strain>
    </source>
</reference>
<protein>
    <recommendedName>
        <fullName>Uncharacterized protein MT2958.2</fullName>
    </recommendedName>
</protein>
<sequence length="249" mass="25807">MAKSPARRCTAKVRRVLSRSVLILCWSLLGAAPAHADDSRLGWPLRPPPAVVRQFDAASPNWNPGHRGVDLAGRPGQPVYAAGSATVVFAGLLAGRPVVSLAHPGGLRTSYEPVVAQVRVGQPVSAPTVIGALAAGHPGCQAAACLHWGAMWGPASGANYVDPLGLLKSTPIRLKPLSSEGRTLHYRQAEPVFVNEAAAGALAGAGHRKSPKQGVFRGAAQGGDIVARQPPGRWVCPSSAGGPIGWHRQ</sequence>
<name>Y2891_MYCTO</name>
<feature type="signal peptide" evidence="1">
    <location>
        <begin position="1"/>
        <end position="36"/>
    </location>
</feature>
<feature type="chain" id="PRO_0000427549" description="Uncharacterized protein MT2958.2">
    <location>
        <begin position="37"/>
        <end position="249"/>
    </location>
</feature>
<feature type="region of interest" description="Disordered" evidence="2">
    <location>
        <begin position="227"/>
        <end position="249"/>
    </location>
</feature>
<accession>P9WL32</accession>
<accession>L0TDP0</accession>
<accession>P65047</accession>
<accession>Q10812</accession>
<keyword id="KW-1185">Reference proteome</keyword>
<keyword id="KW-0732">Signal</keyword>